<organism>
    <name type="scientific">Staphylococcus aureus (strain Mu50 / ATCC 700699)</name>
    <dbReference type="NCBI Taxonomy" id="158878"/>
    <lineage>
        <taxon>Bacteria</taxon>
        <taxon>Bacillati</taxon>
        <taxon>Bacillota</taxon>
        <taxon>Bacilli</taxon>
        <taxon>Bacillales</taxon>
        <taxon>Staphylococcaceae</taxon>
        <taxon>Staphylococcus</taxon>
    </lineage>
</organism>
<sequence length="569" mass="63610">MSNKNKSYDYVIIGGGSAGSVLGNRLSEDKDKEVLVLEAGRSDYFWDLFIQMPAALMFPSGNKFYDWIYSTDEEPHMGGRKVAHARGKVLGGSSSINGMIYQRGNPMDYEGWAEPEGMETWDFAHCLPYFKKLEKTYGAAPYDKFRGHDGPIKLKRGPATNPLFQSFFDAGVEAGYHKTPDVNGFRQEGFGPFDSQVHRGRRMSASRAYLHPAMKRKNLTVETRAFVTEIHYEGRRATGVTYKKNGKLHTIDANEVILSGGAFNTPQLLQLSGIGDSEFLKSKGIEPRVHLPGVGENFEDHLEVYIQHKCKEPVSLQPSLDIKRMPFIGLQWIFTRTGAAASNHFEGGGFVRSNNEVDYPNLMFHFLPIAVRYDGQKAAVAHGYQVHVGPMYSNSRGSLKIKSKDPFEKPSIRFNYLSTEEDKKEWVEAIRVARNILSQKAMDPFNGGEISPGPEVQTDEEILDWVRRDGETALHPSCSAKMGPASDPMAVVDPLTMKVHGMENLRVVDASAMPRTTNGNIHAPVLMLAEKAADIIRGRKPLEPQYIDYYKHGVHDENEGAIEVKPYAK</sequence>
<comment type="function">
    <text evidence="1">Involved in the biosynthesis of the osmoprotectant glycine betaine. Catalyzes the oxidation of choline to betaine aldehyde and betaine aldehyde to glycine betaine at the same rate.</text>
</comment>
<comment type="catalytic activity">
    <reaction evidence="1">
        <text>choline + A = betaine aldehyde + AH2</text>
        <dbReference type="Rhea" id="RHEA:17433"/>
        <dbReference type="ChEBI" id="CHEBI:13193"/>
        <dbReference type="ChEBI" id="CHEBI:15354"/>
        <dbReference type="ChEBI" id="CHEBI:15710"/>
        <dbReference type="ChEBI" id="CHEBI:17499"/>
        <dbReference type="EC" id="1.1.99.1"/>
    </reaction>
</comment>
<comment type="catalytic activity">
    <reaction evidence="1">
        <text>betaine aldehyde + NAD(+) + H2O = glycine betaine + NADH + 2 H(+)</text>
        <dbReference type="Rhea" id="RHEA:15305"/>
        <dbReference type="ChEBI" id="CHEBI:15377"/>
        <dbReference type="ChEBI" id="CHEBI:15378"/>
        <dbReference type="ChEBI" id="CHEBI:15710"/>
        <dbReference type="ChEBI" id="CHEBI:17750"/>
        <dbReference type="ChEBI" id="CHEBI:57540"/>
        <dbReference type="ChEBI" id="CHEBI:57945"/>
        <dbReference type="EC" id="1.2.1.8"/>
    </reaction>
</comment>
<comment type="cofactor">
    <cofactor evidence="1">
        <name>FAD</name>
        <dbReference type="ChEBI" id="CHEBI:57692"/>
    </cofactor>
</comment>
<comment type="pathway">
    <text evidence="1">Amine and polyamine biosynthesis; betaine biosynthesis via choline pathway; betaine aldehyde from choline (cytochrome c reductase route): step 1/1.</text>
</comment>
<comment type="similarity">
    <text evidence="1">Belongs to the GMC oxidoreductase family.</text>
</comment>
<accession>P60336</accession>
<accession>Q99R25</accession>
<proteinExistence type="inferred from homology"/>
<name>BETA_STAAM</name>
<feature type="chain" id="PRO_0000205596" description="Oxygen-dependent choline dehydrogenase">
    <location>
        <begin position="1"/>
        <end position="569"/>
    </location>
</feature>
<feature type="active site" description="Proton acceptor" evidence="1">
    <location>
        <position position="475"/>
    </location>
</feature>
<feature type="binding site" evidence="1">
    <location>
        <begin position="9"/>
        <end position="38"/>
    </location>
    <ligand>
        <name>FAD</name>
        <dbReference type="ChEBI" id="CHEBI:57692"/>
    </ligand>
</feature>
<dbReference type="EC" id="1.1.99.1" evidence="1"/>
<dbReference type="EC" id="1.2.1.8" evidence="1"/>
<dbReference type="EMBL" id="BA000017">
    <property type="protein sequence ID" value="BAB58774.1"/>
    <property type="molecule type" value="Genomic_DNA"/>
</dbReference>
<dbReference type="RefSeq" id="WP_000066521.1">
    <property type="nucleotide sequence ID" value="NC_002758.2"/>
</dbReference>
<dbReference type="SMR" id="P60336"/>
<dbReference type="KEGG" id="sav:SAV2612"/>
<dbReference type="HOGENOM" id="CLU_002865_7_1_9"/>
<dbReference type="PhylomeDB" id="P60336"/>
<dbReference type="UniPathway" id="UPA00529">
    <property type="reaction ID" value="UER00385"/>
</dbReference>
<dbReference type="Proteomes" id="UP000002481">
    <property type="component" value="Chromosome"/>
</dbReference>
<dbReference type="GO" id="GO:0016020">
    <property type="term" value="C:membrane"/>
    <property type="evidence" value="ECO:0007669"/>
    <property type="project" value="TreeGrafter"/>
</dbReference>
<dbReference type="GO" id="GO:0008802">
    <property type="term" value="F:betaine-aldehyde dehydrogenase (NAD+) activity"/>
    <property type="evidence" value="ECO:0007669"/>
    <property type="project" value="UniProtKB-EC"/>
</dbReference>
<dbReference type="GO" id="GO:0008812">
    <property type="term" value="F:choline dehydrogenase activity"/>
    <property type="evidence" value="ECO:0007669"/>
    <property type="project" value="UniProtKB-UniRule"/>
</dbReference>
<dbReference type="GO" id="GO:0050660">
    <property type="term" value="F:flavin adenine dinucleotide binding"/>
    <property type="evidence" value="ECO:0007669"/>
    <property type="project" value="InterPro"/>
</dbReference>
<dbReference type="GO" id="GO:0019285">
    <property type="term" value="P:glycine betaine biosynthetic process from choline"/>
    <property type="evidence" value="ECO:0007669"/>
    <property type="project" value="UniProtKB-UniRule"/>
</dbReference>
<dbReference type="Gene3D" id="3.50.50.60">
    <property type="entry name" value="FAD/NAD(P)-binding domain"/>
    <property type="match status" value="1"/>
</dbReference>
<dbReference type="Gene3D" id="3.30.560.10">
    <property type="entry name" value="Glucose Oxidase, domain 3"/>
    <property type="match status" value="1"/>
</dbReference>
<dbReference type="HAMAP" id="MF_00750">
    <property type="entry name" value="Choline_dehydrogen"/>
    <property type="match status" value="1"/>
</dbReference>
<dbReference type="InterPro" id="IPR011533">
    <property type="entry name" value="BetA"/>
</dbReference>
<dbReference type="InterPro" id="IPR036188">
    <property type="entry name" value="FAD/NAD-bd_sf"/>
</dbReference>
<dbReference type="InterPro" id="IPR012132">
    <property type="entry name" value="GMC_OxRdtase"/>
</dbReference>
<dbReference type="InterPro" id="IPR000172">
    <property type="entry name" value="GMC_OxRdtase_N"/>
</dbReference>
<dbReference type="InterPro" id="IPR007867">
    <property type="entry name" value="GMC_OxRtase_C"/>
</dbReference>
<dbReference type="NCBIfam" id="TIGR01810">
    <property type="entry name" value="betA"/>
    <property type="match status" value="1"/>
</dbReference>
<dbReference type="NCBIfam" id="NF002550">
    <property type="entry name" value="PRK02106.1"/>
    <property type="match status" value="1"/>
</dbReference>
<dbReference type="PANTHER" id="PTHR11552:SF147">
    <property type="entry name" value="CHOLINE DEHYDROGENASE, MITOCHONDRIAL"/>
    <property type="match status" value="1"/>
</dbReference>
<dbReference type="PANTHER" id="PTHR11552">
    <property type="entry name" value="GLUCOSE-METHANOL-CHOLINE GMC OXIDOREDUCTASE"/>
    <property type="match status" value="1"/>
</dbReference>
<dbReference type="Pfam" id="PF05199">
    <property type="entry name" value="GMC_oxred_C"/>
    <property type="match status" value="1"/>
</dbReference>
<dbReference type="Pfam" id="PF00732">
    <property type="entry name" value="GMC_oxred_N"/>
    <property type="match status" value="1"/>
</dbReference>
<dbReference type="PIRSF" id="PIRSF000137">
    <property type="entry name" value="Alcohol_oxidase"/>
    <property type="match status" value="1"/>
</dbReference>
<dbReference type="SUPFAM" id="SSF54373">
    <property type="entry name" value="FAD-linked reductases, C-terminal domain"/>
    <property type="match status" value="1"/>
</dbReference>
<dbReference type="SUPFAM" id="SSF51905">
    <property type="entry name" value="FAD/NAD(P)-binding domain"/>
    <property type="match status" value="1"/>
</dbReference>
<dbReference type="PROSITE" id="PS00623">
    <property type="entry name" value="GMC_OXRED_1"/>
    <property type="match status" value="1"/>
</dbReference>
<dbReference type="PROSITE" id="PS00624">
    <property type="entry name" value="GMC_OXRED_2"/>
    <property type="match status" value="1"/>
</dbReference>
<gene>
    <name evidence="1" type="primary">betA</name>
    <name type="ordered locus">SAV2612</name>
</gene>
<evidence type="ECO:0000255" key="1">
    <source>
        <dbReference type="HAMAP-Rule" id="MF_00750"/>
    </source>
</evidence>
<reference key="1">
    <citation type="journal article" date="2001" name="Lancet">
        <title>Whole genome sequencing of meticillin-resistant Staphylococcus aureus.</title>
        <authorList>
            <person name="Kuroda M."/>
            <person name="Ohta T."/>
            <person name="Uchiyama I."/>
            <person name="Baba T."/>
            <person name="Yuzawa H."/>
            <person name="Kobayashi I."/>
            <person name="Cui L."/>
            <person name="Oguchi A."/>
            <person name="Aoki K."/>
            <person name="Nagai Y."/>
            <person name="Lian J.-Q."/>
            <person name="Ito T."/>
            <person name="Kanamori M."/>
            <person name="Matsumaru H."/>
            <person name="Maruyama A."/>
            <person name="Murakami H."/>
            <person name="Hosoyama A."/>
            <person name="Mizutani-Ui Y."/>
            <person name="Takahashi N.K."/>
            <person name="Sawano T."/>
            <person name="Inoue R."/>
            <person name="Kaito C."/>
            <person name="Sekimizu K."/>
            <person name="Hirakawa H."/>
            <person name="Kuhara S."/>
            <person name="Goto S."/>
            <person name="Yabuzaki J."/>
            <person name="Kanehisa M."/>
            <person name="Yamashita A."/>
            <person name="Oshima K."/>
            <person name="Furuya K."/>
            <person name="Yoshino C."/>
            <person name="Shiba T."/>
            <person name="Hattori M."/>
            <person name="Ogasawara N."/>
            <person name="Hayashi H."/>
            <person name="Hiramatsu K."/>
        </authorList>
    </citation>
    <scope>NUCLEOTIDE SEQUENCE [LARGE SCALE GENOMIC DNA]</scope>
    <source>
        <strain>Mu50 / ATCC 700699</strain>
    </source>
</reference>
<keyword id="KW-0274">FAD</keyword>
<keyword id="KW-0285">Flavoprotein</keyword>
<keyword id="KW-0520">NAD</keyword>
<keyword id="KW-0560">Oxidoreductase</keyword>
<protein>
    <recommendedName>
        <fullName evidence="1">Oxygen-dependent choline dehydrogenase</fullName>
        <shortName evidence="1">CDH</shortName>
        <shortName evidence="1">CHD</shortName>
        <ecNumber evidence="1">1.1.99.1</ecNumber>
    </recommendedName>
    <alternativeName>
        <fullName evidence="1">Betaine aldehyde dehydrogenase</fullName>
        <shortName evidence="1">BADH</shortName>
        <ecNumber evidence="1">1.2.1.8</ecNumber>
    </alternativeName>
</protein>